<feature type="chain" id="PRO_0000116159" description="Gene 3 protein">
    <location>
        <begin position="1"/>
        <end position="257"/>
    </location>
</feature>
<feature type="region of interest" description="Disordered" evidence="1">
    <location>
        <begin position="163"/>
        <end position="257"/>
    </location>
</feature>
<feature type="compositionally biased region" description="Polar residues" evidence="1">
    <location>
        <begin position="163"/>
        <end position="176"/>
    </location>
</feature>
<feature type="compositionally biased region" description="Basic and acidic residues" evidence="1">
    <location>
        <begin position="214"/>
        <end position="240"/>
    </location>
</feature>
<dbReference type="EMBL" id="AY665713">
    <property type="protein sequence ID" value="AAT67260.1"/>
    <property type="molecule type" value="Genomic_DNA"/>
</dbReference>
<dbReference type="PIR" id="D36795">
    <property type="entry name" value="WZBEA2"/>
</dbReference>
<dbReference type="KEGG" id="vg:1487548"/>
<dbReference type="Proteomes" id="UP000001189">
    <property type="component" value="Segment"/>
</dbReference>
<dbReference type="InterPro" id="IPR010741">
    <property type="entry name" value="DUF1314"/>
</dbReference>
<dbReference type="Pfam" id="PF07013">
    <property type="entry name" value="DUF1314"/>
    <property type="match status" value="1"/>
</dbReference>
<reference key="1">
    <citation type="journal article" date="1992" name="Virology">
        <title>The DNA sequence of equine herpesvirus-1.</title>
        <authorList>
            <person name="Telford E.A.R."/>
            <person name="Watson M.S."/>
            <person name="McBride K."/>
            <person name="Davison A.J."/>
        </authorList>
    </citation>
    <scope>NUCLEOTIDE SEQUENCE [LARGE SCALE GENOMIC DNA]</scope>
</reference>
<evidence type="ECO:0000256" key="1">
    <source>
        <dbReference type="SAM" id="MobiDB-lite"/>
    </source>
</evidence>
<organism>
    <name type="scientific">Equine herpesvirus 1 (strain Ab4p)</name>
    <name type="common">EHV-1</name>
    <name type="synonym">Equine abortion virus</name>
    <dbReference type="NCBI Taxonomy" id="31520"/>
    <lineage>
        <taxon>Viruses</taxon>
        <taxon>Duplodnaviria</taxon>
        <taxon>Heunggongvirae</taxon>
        <taxon>Peploviricota</taxon>
        <taxon>Herviviricetes</taxon>
        <taxon>Herpesvirales</taxon>
        <taxon>Orthoherpesviridae</taxon>
        <taxon>Alphaherpesvirinae</taxon>
        <taxon>Varicellovirus</taxon>
        <taxon>Varicellovirus equidalpha1</taxon>
        <taxon>Equid alphaherpesvirus 1</taxon>
    </lineage>
</organism>
<sequence length="257" mass="28023">MGACCSSRRNRSPSLAALAEETEVVLRCLAGRVVDLPGGDEVRIAPDVGRPGQNFGYFKFPGPSRFAYVKFIGRAYALGSGRKFLLYLSRNFQVFGYEDGTGLHMLAKSLHDFLKFKGLSDRDLVVVDSVALTSQLRPLTLPIRSTSDVETLVAEEATTNYTSTENLLGQTQSSTHRPLGVPLSNVKTMGVPPTKPSSQRPRGKGGRPPARLKSIREETVSGMARAREECNSPSEHDRLTSEMTDCDSDSSVSSVFF</sequence>
<organismHost>
    <name type="scientific">Equus caballus</name>
    <name type="common">Horse</name>
    <dbReference type="NCBI Taxonomy" id="9796"/>
</organismHost>
<keyword id="KW-1185">Reference proteome</keyword>
<gene>
    <name type="ordered locus">3</name>
</gene>
<name>VG03_EHV1B</name>
<proteinExistence type="predicted"/>
<protein>
    <recommendedName>
        <fullName>Gene 3 protein</fullName>
    </recommendedName>
</protein>
<accession>P28988</accession>